<protein>
    <recommendedName>
        <fullName evidence="1">Nicotinate-nucleotide--dimethylbenzimidazole phosphoribosyltransferase</fullName>
        <shortName evidence="1">NN:DBI PRT</shortName>
        <ecNumber evidence="1">2.4.2.21</ecNumber>
    </recommendedName>
    <alternativeName>
        <fullName evidence="1">N(1)-alpha-phosphoribosyltransferase</fullName>
    </alternativeName>
</protein>
<dbReference type="EC" id="2.4.2.21" evidence="1"/>
<dbReference type="EMBL" id="AP008227">
    <property type="protein sequence ID" value="BAD71844.1"/>
    <property type="molecule type" value="Genomic_DNA"/>
</dbReference>
<dbReference type="RefSeq" id="WP_008631396.1">
    <property type="nucleotide sequence ID" value="NC_006462.1"/>
</dbReference>
<dbReference type="RefSeq" id="YP_145287.1">
    <property type="nucleotide sequence ID" value="NC_006462.1"/>
</dbReference>
<dbReference type="PDB" id="1J33">
    <property type="method" value="X-ray"/>
    <property type="resolution" value="2.00 A"/>
    <property type="chains" value="A=1-335"/>
</dbReference>
<dbReference type="PDB" id="1WX1">
    <property type="method" value="X-ray"/>
    <property type="resolution" value="1.97 A"/>
    <property type="chains" value="A/B=1-335"/>
</dbReference>
<dbReference type="PDBsum" id="1J33"/>
<dbReference type="PDBsum" id="1WX1"/>
<dbReference type="SMR" id="Q7SIC7"/>
<dbReference type="EnsemblBacteria" id="BAD71844">
    <property type="protein sequence ID" value="BAD71844"/>
    <property type="gene ID" value="BAD71844"/>
</dbReference>
<dbReference type="GeneID" id="3169236"/>
<dbReference type="KEGG" id="ttj:TTHB048"/>
<dbReference type="PATRIC" id="fig|300852.9.peg.1992"/>
<dbReference type="HOGENOM" id="CLU_002982_0_0_0"/>
<dbReference type="PhylomeDB" id="Q7SIC7"/>
<dbReference type="UniPathway" id="UPA00061">
    <property type="reaction ID" value="UER00516"/>
</dbReference>
<dbReference type="EvolutionaryTrace" id="Q7SIC7"/>
<dbReference type="Proteomes" id="UP000000532">
    <property type="component" value="Plasmid pTT27"/>
</dbReference>
<dbReference type="GO" id="GO:0008939">
    <property type="term" value="F:nicotinate-nucleotide-dimethylbenzimidazole phosphoribosyltransferase activity"/>
    <property type="evidence" value="ECO:0007669"/>
    <property type="project" value="UniProtKB-UniRule"/>
</dbReference>
<dbReference type="GO" id="GO:0009236">
    <property type="term" value="P:cobalamin biosynthetic process"/>
    <property type="evidence" value="ECO:0007669"/>
    <property type="project" value="UniProtKB-KW"/>
</dbReference>
<dbReference type="CDD" id="cd02439">
    <property type="entry name" value="DMB-PRT_CobT"/>
    <property type="match status" value="1"/>
</dbReference>
<dbReference type="FunFam" id="3.40.50.10210:FF:000001">
    <property type="entry name" value="Nicotinate-nucleotide--dimethylbenzimidazole phosphoribosyltransferase"/>
    <property type="match status" value="1"/>
</dbReference>
<dbReference type="Gene3D" id="1.10.1610.10">
    <property type="match status" value="1"/>
</dbReference>
<dbReference type="Gene3D" id="3.40.50.10210">
    <property type="match status" value="1"/>
</dbReference>
<dbReference type="HAMAP" id="MF_00230">
    <property type="entry name" value="CobT"/>
    <property type="match status" value="1"/>
</dbReference>
<dbReference type="InterPro" id="IPR003200">
    <property type="entry name" value="Nict_dMeBzImd_PRibTrfase"/>
</dbReference>
<dbReference type="InterPro" id="IPR017846">
    <property type="entry name" value="Nict_dMeBzImd_PRibTrfase_bact"/>
</dbReference>
<dbReference type="InterPro" id="IPR023195">
    <property type="entry name" value="Nict_dMeBzImd_PRibTrfase_N"/>
</dbReference>
<dbReference type="InterPro" id="IPR036087">
    <property type="entry name" value="Nict_dMeBzImd_PRibTrfase_sf"/>
</dbReference>
<dbReference type="NCBIfam" id="TIGR03160">
    <property type="entry name" value="cobT_DBIPRT"/>
    <property type="match status" value="1"/>
</dbReference>
<dbReference type="NCBIfam" id="NF000996">
    <property type="entry name" value="PRK00105.1"/>
    <property type="match status" value="1"/>
</dbReference>
<dbReference type="PANTHER" id="PTHR43463">
    <property type="entry name" value="NICOTINATE-NUCLEOTIDE--DIMETHYLBENZIMIDAZOLE PHOSPHORIBOSYLTRANSFERASE"/>
    <property type="match status" value="1"/>
</dbReference>
<dbReference type="PANTHER" id="PTHR43463:SF1">
    <property type="entry name" value="NICOTINATE-NUCLEOTIDE--DIMETHYLBENZIMIDAZOLE PHOSPHORIBOSYLTRANSFERASE"/>
    <property type="match status" value="1"/>
</dbReference>
<dbReference type="Pfam" id="PF02277">
    <property type="entry name" value="DBI_PRT"/>
    <property type="match status" value="1"/>
</dbReference>
<dbReference type="SUPFAM" id="SSF52733">
    <property type="entry name" value="Nicotinate mononucleotide:5,6-dimethylbenzimidazole phosphoribosyltransferase (CobT)"/>
    <property type="match status" value="1"/>
</dbReference>
<comment type="function">
    <text evidence="1">Catalyzes the synthesis of alpha-ribazole-5'-phosphate from nicotinate mononucleotide (NAMN) and 5,6-dimethylbenzimidazole (DMB).</text>
</comment>
<comment type="catalytic activity">
    <reaction evidence="1">
        <text>5,6-dimethylbenzimidazole + nicotinate beta-D-ribonucleotide = alpha-ribazole 5'-phosphate + nicotinate + H(+)</text>
        <dbReference type="Rhea" id="RHEA:11196"/>
        <dbReference type="ChEBI" id="CHEBI:15378"/>
        <dbReference type="ChEBI" id="CHEBI:15890"/>
        <dbReference type="ChEBI" id="CHEBI:32544"/>
        <dbReference type="ChEBI" id="CHEBI:57502"/>
        <dbReference type="ChEBI" id="CHEBI:57918"/>
        <dbReference type="EC" id="2.4.2.21"/>
    </reaction>
</comment>
<comment type="pathway">
    <text evidence="1">Nucleoside biosynthesis; alpha-ribazole biosynthesis; alpha-ribazole from 5,6-dimethylbenzimidazole: step 1/2.</text>
</comment>
<comment type="similarity">
    <text evidence="1">Belongs to the CobT family.</text>
</comment>
<accession>Q7SIC7</accession>
<accession>Q53WB4</accession>
<evidence type="ECO:0000255" key="1">
    <source>
        <dbReference type="HAMAP-Rule" id="MF_00230"/>
    </source>
</evidence>
<evidence type="ECO:0007829" key="2">
    <source>
        <dbReference type="PDB" id="1J33"/>
    </source>
</evidence>
<evidence type="ECO:0007829" key="3">
    <source>
        <dbReference type="PDB" id="1WX1"/>
    </source>
</evidence>
<proteinExistence type="evidence at protein level"/>
<reference key="1">
    <citation type="submission" date="2004-11" db="EMBL/GenBank/DDBJ databases">
        <title>Complete genome sequence of Thermus thermophilus HB8.</title>
        <authorList>
            <person name="Masui R."/>
            <person name="Kurokawa K."/>
            <person name="Nakagawa N."/>
            <person name="Tokunaga F."/>
            <person name="Koyama Y."/>
            <person name="Shibata T."/>
            <person name="Oshima T."/>
            <person name="Yokoyama S."/>
            <person name="Yasunaga T."/>
            <person name="Kuramitsu S."/>
        </authorList>
    </citation>
    <scope>NUCLEOTIDE SEQUENCE [LARGE SCALE GENOMIC DNA]</scope>
    <source>
        <strain>ATCC 27634 / DSM 579 / HB8</strain>
    </source>
</reference>
<reference key="2">
    <citation type="submission" date="2003-01" db="PDB data bank">
        <title>Crystal structure of cobT from Thermus thermophilus HB8.</title>
        <authorList>
            <consortium name="RIKEN structural genomics initiative (RSGI)"/>
        </authorList>
    </citation>
    <scope>X-RAY CRYSTALLOGRAPHY (2.0 ANGSTROMS)</scope>
</reference>
<geneLocation type="plasmid">
    <name>pTT27</name>
</geneLocation>
<name>COBT_THET8</name>
<sequence>MDPEVFAQARLRMDQLTKPPRALGYLEEVALRLAALQGRVKPELGRGAVVVAAADHGVVAEGVSAYPQEVTRQMVLNFLRGGAAINQFALAADCAVYVLDVGVVGELPDHPGLLKRKVRPGTANLAQGPAMTPEEAERALLAGREAARRAIAEGATLLAAGDMGIGNTTAAAALTAALLGLPPEAVVGRGTGVGEEGLRRKRQAVARALARLHPGMGPLEVAAEVGGLELVAIAGIYLEGYEAGLPLVLDGFPVTAGALLAWKMAPGLRDHLFAGHLSREPGHRHQLEALGLRPLLDLDLALGEGTGAVLAMPLLRAAARILHMATFQEAGVSRG</sequence>
<gene>
    <name evidence="1" type="primary">cobT</name>
    <name type="ordered locus">TTHB048</name>
</gene>
<feature type="chain" id="PRO_0000167074" description="Nicotinate-nucleotide--dimethylbenzimidazole phosphoribosyltransferase">
    <location>
        <begin position="1"/>
        <end position="335"/>
    </location>
</feature>
<feature type="active site" description="Proton acceptor" evidence="1">
    <location>
        <position position="304"/>
    </location>
</feature>
<feature type="helix" evidence="3">
    <location>
        <begin position="3"/>
        <end position="14"/>
    </location>
</feature>
<feature type="strand" evidence="3">
    <location>
        <begin position="16"/>
        <end position="18"/>
    </location>
</feature>
<feature type="turn" evidence="3">
    <location>
        <begin position="20"/>
        <end position="23"/>
    </location>
</feature>
<feature type="helix" evidence="3">
    <location>
        <begin position="24"/>
        <end position="37"/>
    </location>
</feature>
<feature type="strand" evidence="3">
    <location>
        <begin position="47"/>
        <end position="54"/>
    </location>
</feature>
<feature type="helix" evidence="3">
    <location>
        <begin position="57"/>
        <end position="61"/>
    </location>
</feature>
<feature type="helix" evidence="3">
    <location>
        <begin position="70"/>
        <end position="79"/>
    </location>
</feature>
<feature type="helix" evidence="3">
    <location>
        <begin position="84"/>
        <end position="91"/>
    </location>
</feature>
<feature type="strand" evidence="3">
    <location>
        <begin position="94"/>
        <end position="102"/>
    </location>
</feature>
<feature type="strand" evidence="3">
    <location>
        <begin position="113"/>
        <end position="115"/>
    </location>
</feature>
<feature type="strand" evidence="3">
    <location>
        <begin position="119"/>
        <end position="121"/>
    </location>
</feature>
<feature type="turn" evidence="3">
    <location>
        <begin position="125"/>
        <end position="127"/>
    </location>
</feature>
<feature type="helix" evidence="3">
    <location>
        <begin position="133"/>
        <end position="152"/>
    </location>
</feature>
<feature type="strand" evidence="3">
    <location>
        <begin position="156"/>
        <end position="163"/>
    </location>
</feature>
<feature type="helix" evidence="3">
    <location>
        <begin position="167"/>
        <end position="179"/>
    </location>
</feature>
<feature type="helix" evidence="3">
    <location>
        <begin position="183"/>
        <end position="186"/>
    </location>
</feature>
<feature type="turn" evidence="2">
    <location>
        <begin position="190"/>
        <end position="192"/>
    </location>
</feature>
<feature type="helix" evidence="3">
    <location>
        <begin position="195"/>
        <end position="210"/>
    </location>
</feature>
<feature type="helix" evidence="3">
    <location>
        <begin position="218"/>
        <end position="225"/>
    </location>
</feature>
<feature type="helix" evidence="3">
    <location>
        <begin position="228"/>
        <end position="242"/>
    </location>
</feature>
<feature type="strand" evidence="3">
    <location>
        <begin position="247"/>
        <end position="249"/>
    </location>
</feature>
<feature type="helix" evidence="3">
    <location>
        <begin position="252"/>
        <end position="264"/>
    </location>
</feature>
<feature type="helix" evidence="3">
    <location>
        <begin position="266"/>
        <end position="271"/>
    </location>
</feature>
<feature type="strand" evidence="3">
    <location>
        <begin position="272"/>
        <end position="274"/>
    </location>
</feature>
<feature type="helix" evidence="3">
    <location>
        <begin position="282"/>
        <end position="290"/>
    </location>
</feature>
<feature type="helix" evidence="3">
    <location>
        <begin position="306"/>
        <end position="321"/>
    </location>
</feature>
<feature type="helix" evidence="3">
    <location>
        <begin position="327"/>
        <end position="330"/>
    </location>
</feature>
<organism>
    <name type="scientific">Thermus thermophilus (strain ATCC 27634 / DSM 579 / HB8)</name>
    <dbReference type="NCBI Taxonomy" id="300852"/>
    <lineage>
        <taxon>Bacteria</taxon>
        <taxon>Thermotogati</taxon>
        <taxon>Deinococcota</taxon>
        <taxon>Deinococci</taxon>
        <taxon>Thermales</taxon>
        <taxon>Thermaceae</taxon>
        <taxon>Thermus</taxon>
    </lineage>
</organism>
<keyword id="KW-0002">3D-structure</keyword>
<keyword id="KW-0169">Cobalamin biosynthesis</keyword>
<keyword id="KW-0328">Glycosyltransferase</keyword>
<keyword id="KW-0614">Plasmid</keyword>
<keyword id="KW-1185">Reference proteome</keyword>
<keyword id="KW-0808">Transferase</keyword>